<dbReference type="EMBL" id="U03065">
    <property type="protein sequence ID" value="AAA57182.1"/>
    <property type="molecule type" value="mRNA"/>
</dbReference>
<dbReference type="PIR" id="I48897">
    <property type="entry name" value="I48897"/>
</dbReference>
<dbReference type="SMR" id="P50713"/>
<dbReference type="FunCoup" id="P50713">
    <property type="interactions" value="42"/>
</dbReference>
<dbReference type="AGR" id="MGI:99586"/>
<dbReference type="MGI" id="MGI:99586">
    <property type="gene designation" value="Defa15"/>
</dbReference>
<dbReference type="InParanoid" id="P50713"/>
<dbReference type="PRO" id="PR:P50713"/>
<dbReference type="Proteomes" id="UP000000589">
    <property type="component" value="Unplaced"/>
</dbReference>
<dbReference type="RNAct" id="P50713">
    <property type="molecule type" value="protein"/>
</dbReference>
<dbReference type="GO" id="GO:0005615">
    <property type="term" value="C:extracellular space"/>
    <property type="evidence" value="ECO:0007669"/>
    <property type="project" value="InterPro"/>
</dbReference>
<dbReference type="GO" id="GO:0042742">
    <property type="term" value="P:defense response to bacterium"/>
    <property type="evidence" value="ECO:0007669"/>
    <property type="project" value="UniProtKB-KW"/>
</dbReference>
<dbReference type="InterPro" id="IPR016327">
    <property type="entry name" value="Alpha-defensin"/>
</dbReference>
<dbReference type="InterPro" id="IPR006081">
    <property type="entry name" value="Alpha-defensin_C"/>
</dbReference>
<dbReference type="InterPro" id="IPR002366">
    <property type="entry name" value="Alpha-defensin_N"/>
</dbReference>
<dbReference type="InterPro" id="IPR006080">
    <property type="entry name" value="Beta/alpha-defensin_C"/>
</dbReference>
<dbReference type="PANTHER" id="PTHR11876">
    <property type="entry name" value="ALPHA-DEFENSIN 1"/>
    <property type="match status" value="1"/>
</dbReference>
<dbReference type="PANTHER" id="PTHR11876:SF2">
    <property type="entry name" value="ALPHA-DEFENSIN 1-RELATED"/>
    <property type="match status" value="1"/>
</dbReference>
<dbReference type="Pfam" id="PF00323">
    <property type="entry name" value="Defensin_1"/>
    <property type="match status" value="1"/>
</dbReference>
<dbReference type="Pfam" id="PF00879">
    <property type="entry name" value="Defensin_propep"/>
    <property type="match status" value="1"/>
</dbReference>
<dbReference type="PIRSF" id="PIRSF001875">
    <property type="entry name" value="Alpha-defensin"/>
    <property type="match status" value="1"/>
</dbReference>
<dbReference type="SMART" id="SM01418">
    <property type="entry name" value="Defensin_propep"/>
    <property type="match status" value="1"/>
</dbReference>
<dbReference type="SMART" id="SM00048">
    <property type="entry name" value="DEFSN"/>
    <property type="match status" value="1"/>
</dbReference>
<dbReference type="SUPFAM" id="SSF57392">
    <property type="entry name" value="Defensin-like"/>
    <property type="match status" value="1"/>
</dbReference>
<dbReference type="PROSITE" id="PS00269">
    <property type="entry name" value="DEFENSIN"/>
    <property type="match status" value="1"/>
</dbReference>
<sequence>MKTLVLLSALVLLAFQVQADPIQNTDEETKTEEQPGEDDQAVSVSFGDPEGSSLQEESLRDLVCYCRKRGCKRREHINGTCRKGHLLYMLCCR</sequence>
<gene>
    <name type="primary">Defa15</name>
    <name type="synonym">Defcr15</name>
</gene>
<accession>P50713</accession>
<feature type="signal peptide" evidence="2">
    <location>
        <begin position="1"/>
        <end position="19"/>
    </location>
</feature>
<feature type="propeptide" id="PRO_0000006843" evidence="1">
    <location>
        <begin position="20"/>
        <end position="58"/>
    </location>
</feature>
<feature type="peptide" id="PRO_0000006844" description="Alpha-defensin 15">
    <location>
        <begin position="59"/>
        <end position="93"/>
    </location>
</feature>
<feature type="region of interest" description="Disordered" evidence="3">
    <location>
        <begin position="23"/>
        <end position="56"/>
    </location>
</feature>
<feature type="disulfide bond" evidence="1">
    <location>
        <begin position="64"/>
        <end position="92"/>
    </location>
</feature>
<feature type="disulfide bond" evidence="1">
    <location>
        <begin position="66"/>
        <end position="81"/>
    </location>
</feature>
<feature type="disulfide bond" evidence="1">
    <location>
        <begin position="71"/>
        <end position="91"/>
    </location>
</feature>
<organism>
    <name type="scientific">Mus musculus</name>
    <name type="common">Mouse</name>
    <dbReference type="NCBI Taxonomy" id="10090"/>
    <lineage>
        <taxon>Eukaryota</taxon>
        <taxon>Metazoa</taxon>
        <taxon>Chordata</taxon>
        <taxon>Craniata</taxon>
        <taxon>Vertebrata</taxon>
        <taxon>Euteleostomi</taxon>
        <taxon>Mammalia</taxon>
        <taxon>Eutheria</taxon>
        <taxon>Euarchontoglires</taxon>
        <taxon>Glires</taxon>
        <taxon>Rodentia</taxon>
        <taxon>Myomorpha</taxon>
        <taxon>Muroidea</taxon>
        <taxon>Muridae</taxon>
        <taxon>Murinae</taxon>
        <taxon>Mus</taxon>
        <taxon>Mus</taxon>
    </lineage>
</organism>
<evidence type="ECO:0000250" key="1"/>
<evidence type="ECO:0000255" key="2"/>
<evidence type="ECO:0000256" key="3">
    <source>
        <dbReference type="SAM" id="MobiDB-lite"/>
    </source>
</evidence>
<evidence type="ECO:0000305" key="4"/>
<keyword id="KW-0044">Antibiotic</keyword>
<keyword id="KW-0929">Antimicrobial</keyword>
<keyword id="KW-0211">Defensin</keyword>
<keyword id="KW-1015">Disulfide bond</keyword>
<keyword id="KW-1185">Reference proteome</keyword>
<keyword id="KW-0964">Secreted</keyword>
<keyword id="KW-0732">Signal</keyword>
<protein>
    <recommendedName>
        <fullName>Alpha-defensin 15</fullName>
    </recommendedName>
    <alternativeName>
        <fullName>Defensin-related cryptdin-15</fullName>
    </alternativeName>
</protein>
<name>DFA15_MOUSE</name>
<proteinExistence type="evidence at transcript level"/>
<reference key="1">
    <citation type="journal article" date="1994" name="Infect. Immun.">
        <title>Mouse Paneth cell defensins: primary structures and antibacterial activities of numerous cryptdin isoforms.</title>
        <authorList>
            <person name="Ouellette A.J."/>
            <person name="Hsieh M.M."/>
            <person name="Nosek M.T."/>
            <person name="Cano-Gauci D.F."/>
            <person name="Huttner K.M."/>
            <person name="Buick R.N."/>
            <person name="Selsted M.E."/>
        </authorList>
    </citation>
    <scope>NUCLEOTIDE SEQUENCE [MRNA]</scope>
    <source>
        <strain>CD-1</strain>
        <tissue>Intestinal crypt</tissue>
    </source>
</reference>
<reference key="2">
    <citation type="journal article" date="1994" name="Genomics">
        <title>Structure and diversity of the murine cryptdin gene family.</title>
        <authorList>
            <person name="Huttner K.M."/>
            <person name="Selsted M.E."/>
            <person name="Ouellette A.J."/>
        </authorList>
    </citation>
    <scope>NUCLEOTIDE SEQUENCE [MRNA] OF 59-93</scope>
    <source>
        <strain>129/SvJ</strain>
        <strain>C3H/HeJ</strain>
        <tissue>Small intestine</tissue>
    </source>
</reference>
<comment type="function">
    <text>Probably contributes to the antimicrobial barrier function of the small bowel mucosa.</text>
</comment>
<comment type="subcellular location">
    <subcellularLocation>
        <location>Secreted</location>
    </subcellularLocation>
</comment>
<comment type="tissue specificity">
    <text>Paneth cells of the small bowel.</text>
</comment>
<comment type="similarity">
    <text evidence="4">Belongs to the alpha-defensin family.</text>
</comment>